<evidence type="ECO:0000255" key="1">
    <source>
        <dbReference type="HAMAP-Rule" id="MF_01347"/>
    </source>
</evidence>
<reference key="1">
    <citation type="journal article" date="1982" name="Nucleic Acids Res.">
        <title>The maize chloroplast genes for the beta and epsilon subunits of the photosynthetic coupling factor CF1 are fused.</title>
        <authorList>
            <person name="Krebbers E.T."/>
            <person name="Larrinua I.M."/>
            <person name="McIntosh L."/>
            <person name="Bogorad L."/>
        </authorList>
    </citation>
    <scope>NUCLEOTIDE SEQUENCE [GENOMIC DNA]</scope>
</reference>
<reference key="2">
    <citation type="journal article" date="1995" name="J. Mol. Biol.">
        <title>Complete sequence of the maize chloroplast genome: gene content, hotspots of divergence and fine tuning of genetic information by transcript editing.</title>
        <authorList>
            <person name="Maier R.M."/>
            <person name="Neckermann K."/>
            <person name="Igloi G.L."/>
            <person name="Koessel H."/>
        </authorList>
    </citation>
    <scope>NUCLEOTIDE SEQUENCE [LARGE SCALE GENOMIC DNA]</scope>
    <source>
        <strain>cv. B73</strain>
    </source>
</reference>
<sequence length="498" mass="54041">MRTNPTTSRPGISTIEEKSVGRIDQIIGPVLDITFPPGKLPYIYNALIVKSRDTADKQINVTCEVQQLLGNNRVRAVAMSATEGLMRGMEVIDTGTPLSVPVGGATLGRIFNVLGEPIDNLGPVDTSATFPIHRSAPAFIELDTKLSIFETGIKVVDLLAPYRRGGKIGLFGGAGVGKTVLIMELINNIAKAHGGVSVFGGVGERTREGNDLYMEMKESGVINEKNIEESKVALVYGQMNEPPGARMRVGLTALTMAEYFRDVNKQDVLLFIDNIFRFVQAGSEVSALLGRMPSAVGYQPTLSTEMGSLQERITSTKKGSITSIQAVYVPADDLTDPAPATTFAHLDATTVLSRGLASKGIYPAVDPLDSTSTMLQPRIVGNEHYETAQRVKETLQRYKELQDIIAILGLDELSEEDRLTVARARKIERFLSQPFFVAEVFTGSPGKYVGLAETIRGFQLILSGELDGLPEQAFYLVGNIDEASTKAINLEEESKLKK</sequence>
<gene>
    <name evidence="1" type="primary">atpB</name>
</gene>
<comment type="function">
    <text evidence="1">Produces ATP from ADP in the presence of a proton gradient across the membrane. The catalytic sites are hosted primarily by the beta subunits.</text>
</comment>
<comment type="catalytic activity">
    <reaction evidence="1">
        <text>ATP + H2O + 4 H(+)(in) = ADP + phosphate + 5 H(+)(out)</text>
        <dbReference type="Rhea" id="RHEA:57720"/>
        <dbReference type="ChEBI" id="CHEBI:15377"/>
        <dbReference type="ChEBI" id="CHEBI:15378"/>
        <dbReference type="ChEBI" id="CHEBI:30616"/>
        <dbReference type="ChEBI" id="CHEBI:43474"/>
        <dbReference type="ChEBI" id="CHEBI:456216"/>
        <dbReference type="EC" id="7.1.2.2"/>
    </reaction>
</comment>
<comment type="subunit">
    <text evidence="1">F-type ATPases have 2 components, CF(1) - the catalytic core - and CF(0) - the membrane proton channel. CF(1) has five subunits: alpha(3), beta(3), gamma(1), delta(1), epsilon(1). CF(0) has four main subunits: a(1), b(1), b'(1) and c(9-12).</text>
</comment>
<comment type="subcellular location">
    <subcellularLocation>
        <location evidence="1">Plastid</location>
        <location evidence="1">Chloroplast thylakoid membrane</location>
        <topology evidence="1">Peripheral membrane protein</topology>
    </subcellularLocation>
</comment>
<comment type="similarity">
    <text evidence="1">Belongs to the ATPase alpha/beta chains family.</text>
</comment>
<feature type="chain" id="PRO_0000144522" description="ATP synthase subunit beta, chloroplastic">
    <location>
        <begin position="1"/>
        <end position="498"/>
    </location>
</feature>
<feature type="binding site" evidence="1">
    <location>
        <begin position="172"/>
        <end position="179"/>
    </location>
    <ligand>
        <name>ATP</name>
        <dbReference type="ChEBI" id="CHEBI:30616"/>
    </ligand>
</feature>
<protein>
    <recommendedName>
        <fullName evidence="1">ATP synthase subunit beta, chloroplastic</fullName>
        <ecNumber evidence="1">7.1.2.2</ecNumber>
    </recommendedName>
    <alternativeName>
        <fullName evidence="1">ATP synthase F1 sector subunit beta</fullName>
    </alternativeName>
    <alternativeName>
        <fullName evidence="1">F-ATPase subunit beta</fullName>
    </alternativeName>
</protein>
<name>ATPB_MAIZE</name>
<geneLocation type="chloroplast"/>
<keyword id="KW-0066">ATP synthesis</keyword>
<keyword id="KW-0067">ATP-binding</keyword>
<keyword id="KW-0139">CF(1)</keyword>
<keyword id="KW-0150">Chloroplast</keyword>
<keyword id="KW-0375">Hydrogen ion transport</keyword>
<keyword id="KW-0406">Ion transport</keyword>
<keyword id="KW-0472">Membrane</keyword>
<keyword id="KW-0547">Nucleotide-binding</keyword>
<keyword id="KW-0934">Plastid</keyword>
<keyword id="KW-1185">Reference proteome</keyword>
<keyword id="KW-0793">Thylakoid</keyword>
<keyword id="KW-1278">Translocase</keyword>
<keyword id="KW-0813">Transport</keyword>
<dbReference type="EC" id="7.1.2.2" evidence="1"/>
<dbReference type="EMBL" id="J01421">
    <property type="protein sequence ID" value="AAA85356.1"/>
    <property type="molecule type" value="Genomic_DNA"/>
</dbReference>
<dbReference type="EMBL" id="X86563">
    <property type="protein sequence ID" value="CAA60293.1"/>
    <property type="molecule type" value="Genomic_DNA"/>
</dbReference>
<dbReference type="PIR" id="A01025">
    <property type="entry name" value="PWZMB"/>
</dbReference>
<dbReference type="RefSeq" id="NP_043032.1">
    <property type="nucleotide sequence ID" value="NC_001666.2"/>
</dbReference>
<dbReference type="SMR" id="P00827"/>
<dbReference type="FunCoup" id="P00827">
    <property type="interactions" value="462"/>
</dbReference>
<dbReference type="STRING" id="4577.P00827"/>
<dbReference type="PaxDb" id="4577-GRMZM2G385622_P01"/>
<dbReference type="GeneID" id="845170"/>
<dbReference type="KEGG" id="zma:845170"/>
<dbReference type="MaizeGDB" id="69208"/>
<dbReference type="eggNOG" id="KOG1350">
    <property type="taxonomic scope" value="Eukaryota"/>
</dbReference>
<dbReference type="HOGENOM" id="CLU_022398_0_2_1"/>
<dbReference type="InParanoid" id="P00827"/>
<dbReference type="OrthoDB" id="651731at2759"/>
<dbReference type="Proteomes" id="UP000007305">
    <property type="component" value="Chloroplast"/>
</dbReference>
<dbReference type="GO" id="GO:0009535">
    <property type="term" value="C:chloroplast thylakoid membrane"/>
    <property type="evidence" value="ECO:0007669"/>
    <property type="project" value="UniProtKB-SubCell"/>
</dbReference>
<dbReference type="GO" id="GO:0005739">
    <property type="term" value="C:mitochondrion"/>
    <property type="evidence" value="ECO:0007669"/>
    <property type="project" value="GOC"/>
</dbReference>
<dbReference type="GO" id="GO:0045259">
    <property type="term" value="C:proton-transporting ATP synthase complex"/>
    <property type="evidence" value="ECO:0007669"/>
    <property type="project" value="UniProtKB-KW"/>
</dbReference>
<dbReference type="GO" id="GO:0005524">
    <property type="term" value="F:ATP binding"/>
    <property type="evidence" value="ECO:0007669"/>
    <property type="project" value="UniProtKB-UniRule"/>
</dbReference>
<dbReference type="GO" id="GO:0016887">
    <property type="term" value="F:ATP hydrolysis activity"/>
    <property type="evidence" value="ECO:0007669"/>
    <property type="project" value="InterPro"/>
</dbReference>
<dbReference type="GO" id="GO:0046933">
    <property type="term" value="F:proton-transporting ATP synthase activity, rotational mechanism"/>
    <property type="evidence" value="ECO:0007669"/>
    <property type="project" value="UniProtKB-UniRule"/>
</dbReference>
<dbReference type="GO" id="GO:0042776">
    <property type="term" value="P:proton motive force-driven mitochondrial ATP synthesis"/>
    <property type="evidence" value="ECO:0000318"/>
    <property type="project" value="GO_Central"/>
</dbReference>
<dbReference type="CDD" id="cd18110">
    <property type="entry name" value="ATP-synt_F1_beta_C"/>
    <property type="match status" value="1"/>
</dbReference>
<dbReference type="CDD" id="cd18115">
    <property type="entry name" value="ATP-synt_F1_beta_N"/>
    <property type="match status" value="1"/>
</dbReference>
<dbReference type="CDD" id="cd01133">
    <property type="entry name" value="F1-ATPase_beta_CD"/>
    <property type="match status" value="1"/>
</dbReference>
<dbReference type="FunFam" id="1.10.1140.10:FF:000001">
    <property type="entry name" value="ATP synthase subunit beta"/>
    <property type="match status" value="1"/>
</dbReference>
<dbReference type="FunFam" id="3.40.50.12240:FF:000006">
    <property type="entry name" value="ATP synthase subunit beta"/>
    <property type="match status" value="1"/>
</dbReference>
<dbReference type="FunFam" id="3.40.50.300:FF:000026">
    <property type="entry name" value="ATP synthase subunit beta"/>
    <property type="match status" value="1"/>
</dbReference>
<dbReference type="FunFam" id="2.40.10.170:FF:000002">
    <property type="entry name" value="ATP synthase subunit beta, chloroplastic"/>
    <property type="match status" value="1"/>
</dbReference>
<dbReference type="Gene3D" id="2.40.10.170">
    <property type="match status" value="1"/>
</dbReference>
<dbReference type="Gene3D" id="1.10.1140.10">
    <property type="entry name" value="Bovine Mitochondrial F1-atpase, Atp Synthase Beta Chain, Chain D, domain 3"/>
    <property type="match status" value="1"/>
</dbReference>
<dbReference type="Gene3D" id="3.40.50.300">
    <property type="entry name" value="P-loop containing nucleotide triphosphate hydrolases"/>
    <property type="match status" value="1"/>
</dbReference>
<dbReference type="HAMAP" id="MF_01347">
    <property type="entry name" value="ATP_synth_beta_bact"/>
    <property type="match status" value="1"/>
</dbReference>
<dbReference type="InterPro" id="IPR003593">
    <property type="entry name" value="AAA+_ATPase"/>
</dbReference>
<dbReference type="InterPro" id="IPR055190">
    <property type="entry name" value="ATP-synt_VA_C"/>
</dbReference>
<dbReference type="InterPro" id="IPR005722">
    <property type="entry name" value="ATP_synth_F1_bsu"/>
</dbReference>
<dbReference type="InterPro" id="IPR020003">
    <property type="entry name" value="ATPase_a/bsu_AS"/>
</dbReference>
<dbReference type="InterPro" id="IPR050053">
    <property type="entry name" value="ATPase_alpha/beta_chains"/>
</dbReference>
<dbReference type="InterPro" id="IPR004100">
    <property type="entry name" value="ATPase_F1/V1/A1_a/bsu_N"/>
</dbReference>
<dbReference type="InterPro" id="IPR036121">
    <property type="entry name" value="ATPase_F1/V1/A1_a/bsu_N_sf"/>
</dbReference>
<dbReference type="InterPro" id="IPR000194">
    <property type="entry name" value="ATPase_F1/V1/A1_a/bsu_nucl-bd"/>
</dbReference>
<dbReference type="InterPro" id="IPR024034">
    <property type="entry name" value="ATPase_F1/V1_b/a_C"/>
</dbReference>
<dbReference type="InterPro" id="IPR027417">
    <property type="entry name" value="P-loop_NTPase"/>
</dbReference>
<dbReference type="NCBIfam" id="TIGR01039">
    <property type="entry name" value="atpD"/>
    <property type="match status" value="1"/>
</dbReference>
<dbReference type="PANTHER" id="PTHR15184">
    <property type="entry name" value="ATP SYNTHASE"/>
    <property type="match status" value="1"/>
</dbReference>
<dbReference type="PANTHER" id="PTHR15184:SF71">
    <property type="entry name" value="ATP SYNTHASE SUBUNIT BETA, MITOCHONDRIAL"/>
    <property type="match status" value="1"/>
</dbReference>
<dbReference type="Pfam" id="PF00006">
    <property type="entry name" value="ATP-synt_ab"/>
    <property type="match status" value="1"/>
</dbReference>
<dbReference type="Pfam" id="PF02874">
    <property type="entry name" value="ATP-synt_ab_N"/>
    <property type="match status" value="1"/>
</dbReference>
<dbReference type="Pfam" id="PF22919">
    <property type="entry name" value="ATP-synt_VA_C"/>
    <property type="match status" value="1"/>
</dbReference>
<dbReference type="SMART" id="SM00382">
    <property type="entry name" value="AAA"/>
    <property type="match status" value="1"/>
</dbReference>
<dbReference type="SUPFAM" id="SSF47917">
    <property type="entry name" value="C-terminal domain of alpha and beta subunits of F1 ATP synthase"/>
    <property type="match status" value="1"/>
</dbReference>
<dbReference type="SUPFAM" id="SSF50615">
    <property type="entry name" value="N-terminal domain of alpha and beta subunits of F1 ATP synthase"/>
    <property type="match status" value="1"/>
</dbReference>
<dbReference type="SUPFAM" id="SSF52540">
    <property type="entry name" value="P-loop containing nucleoside triphosphate hydrolases"/>
    <property type="match status" value="1"/>
</dbReference>
<dbReference type="PROSITE" id="PS00152">
    <property type="entry name" value="ATPASE_ALPHA_BETA"/>
    <property type="match status" value="1"/>
</dbReference>
<organism>
    <name type="scientific">Zea mays</name>
    <name type="common">Maize</name>
    <dbReference type="NCBI Taxonomy" id="4577"/>
    <lineage>
        <taxon>Eukaryota</taxon>
        <taxon>Viridiplantae</taxon>
        <taxon>Streptophyta</taxon>
        <taxon>Embryophyta</taxon>
        <taxon>Tracheophyta</taxon>
        <taxon>Spermatophyta</taxon>
        <taxon>Magnoliopsida</taxon>
        <taxon>Liliopsida</taxon>
        <taxon>Poales</taxon>
        <taxon>Poaceae</taxon>
        <taxon>PACMAD clade</taxon>
        <taxon>Panicoideae</taxon>
        <taxon>Andropogonodae</taxon>
        <taxon>Andropogoneae</taxon>
        <taxon>Tripsacinae</taxon>
        <taxon>Zea</taxon>
    </lineage>
</organism>
<proteinExistence type="inferred from homology"/>
<accession>P00827</accession>